<reference key="1">
    <citation type="journal article" date="1990" name="Virology">
        <title>The complete DNA sequence of vaccinia virus.</title>
        <authorList>
            <person name="Goebel S.J."/>
            <person name="Johnson G.P."/>
            <person name="Perkus M.E."/>
            <person name="Davis S.W."/>
            <person name="Winslow J.P."/>
            <person name="Paoletti E."/>
        </authorList>
    </citation>
    <scope>NUCLEOTIDE SEQUENCE [LARGE SCALE GENOMIC DNA]</scope>
</reference>
<reference key="2">
    <citation type="journal article" date="1990" name="Virology">
        <title>Appendix to 'The complete DNA sequence of vaccinia virus'.</title>
        <authorList>
            <person name="Goebel S.J."/>
            <person name="Johnson G.P."/>
            <person name="Perkus M.E."/>
            <person name="Davis S.W."/>
            <person name="Winslow J.P."/>
            <person name="Paoletti E."/>
        </authorList>
    </citation>
    <scope>NUCLEOTIDE SEQUENCE [LARGE SCALE GENOMIC DNA]</scope>
</reference>
<organismHost>
    <name type="scientific">Homo sapiens</name>
    <name type="common">Human</name>
    <dbReference type="NCBI Taxonomy" id="9606"/>
</organismHost>
<comment type="function">
    <text evidence="1">Structural protein involved in the envelopment of mature virion (MV) to form the wrapped virion (WV). The wrapping consists of the addition of Golgi membranes to the mature virion. Participates in mature virion (MV) movement within the infected cell. May play an indirect role in MV-cell fusion.</text>
</comment>
<comment type="subunit">
    <text evidence="1">Homohexamers, covalently linked. Interacts with OPG144 and OPG153.</text>
</comment>
<comment type="subcellular location">
    <subcellularLocation>
        <location evidence="1">Virion</location>
    </subcellularLocation>
    <text evidence="1">Located to the mature virion membrane via interaction with protein OPG144.</text>
</comment>
<comment type="similarity">
    <text evidence="2">Belongs to the orthopoxvirus OPG154 protein family.</text>
</comment>
<evidence type="ECO:0000250" key="1">
    <source>
        <dbReference type="UniProtKB" id="P11258"/>
    </source>
</evidence>
<evidence type="ECO:0000305" key="2"/>
<proteinExistence type="inferred from homology"/>
<organism>
    <name type="scientific">Vaccinia virus (strain Copenhagen)</name>
    <name type="common">VACV</name>
    <dbReference type="NCBI Taxonomy" id="10249"/>
    <lineage>
        <taxon>Viruses</taxon>
        <taxon>Varidnaviria</taxon>
        <taxon>Bamfordvirae</taxon>
        <taxon>Nucleocytoviricota</taxon>
        <taxon>Pokkesviricetes</taxon>
        <taxon>Chitovirales</taxon>
        <taxon>Poxviridae</taxon>
        <taxon>Chordopoxvirinae</taxon>
        <taxon>Orthopoxvirus</taxon>
        <taxon>Vaccinia virus</taxon>
    </lineage>
</organism>
<name>PG154_VACCC</name>
<gene>
    <name type="primary">OPG154</name>
    <name type="ORF">A27L</name>
</gene>
<keyword id="KW-0175">Coiled coil</keyword>
<keyword id="KW-1015">Disulfide bond</keyword>
<keyword id="KW-0597">Phosphoprotein</keyword>
<keyword id="KW-1185">Reference proteome</keyword>
<keyword id="KW-0946">Virion</keyword>
<feature type="chain" id="PRO_0000099211" description="Protein OPG154">
    <location>
        <begin position="1"/>
        <end position="110"/>
    </location>
</feature>
<feature type="disulfide bond" description="Interchain (with C-441 in A26)" evidence="1">
    <location>
        <position position="71"/>
    </location>
</feature>
<feature type="disulfide bond" description="Interchain (with C-442 in A26)" evidence="1">
    <location>
        <position position="72"/>
    </location>
</feature>
<dbReference type="EMBL" id="M35027">
    <property type="protein sequence ID" value="AAA48152.1"/>
    <property type="molecule type" value="Genomic_DNA"/>
</dbReference>
<dbReference type="PIR" id="B42520">
    <property type="entry name" value="WMVZ2U"/>
</dbReference>
<dbReference type="BMRB" id="P20535"/>
<dbReference type="SMR" id="P20535"/>
<dbReference type="Proteomes" id="UP000008269">
    <property type="component" value="Segment"/>
</dbReference>
<dbReference type="GO" id="GO:0019031">
    <property type="term" value="C:viral envelope"/>
    <property type="evidence" value="ECO:0007669"/>
    <property type="project" value="InterPro"/>
</dbReference>
<dbReference type="GO" id="GO:0019064">
    <property type="term" value="P:fusion of virus membrane with host plasma membrane"/>
    <property type="evidence" value="ECO:0007669"/>
    <property type="project" value="InterPro"/>
</dbReference>
<dbReference type="Gene3D" id="1.20.5.110">
    <property type="match status" value="1"/>
</dbReference>
<dbReference type="InterPro" id="IPR003436">
    <property type="entry name" value="Chordopox_Fusion/A27"/>
</dbReference>
<dbReference type="Pfam" id="PF02346">
    <property type="entry name" value="Vac_Fusion"/>
    <property type="match status" value="1"/>
</dbReference>
<dbReference type="PRINTS" id="PR01847">
    <property type="entry name" value="VIRALFUSION"/>
</dbReference>
<accession>P20535</accession>
<sequence length="110" mass="12616">MDGTLFPGDDDLAIPATEFFSTKADKKPEAKREAIVKADEDDNEETLKQRLTNLEKKITNVTTKFEQIEKCCKRNDEVLFRLENHAETLRAAMISLAKKIDVQTGRRPYE</sequence>
<protein>
    <recommendedName>
        <fullName>Protein OPG154</fullName>
    </recommendedName>
</protein>